<organism>
    <name type="scientific">Xanthomonas campestris pv. campestris (strain 8004)</name>
    <dbReference type="NCBI Taxonomy" id="314565"/>
    <lineage>
        <taxon>Bacteria</taxon>
        <taxon>Pseudomonadati</taxon>
        <taxon>Pseudomonadota</taxon>
        <taxon>Gammaproteobacteria</taxon>
        <taxon>Lysobacterales</taxon>
        <taxon>Lysobacteraceae</taxon>
        <taxon>Xanthomonas</taxon>
    </lineage>
</organism>
<gene>
    <name evidence="1" type="primary">ndk</name>
    <name type="ordered locus">XC_2203</name>
</gene>
<dbReference type="EC" id="2.7.4.6" evidence="1"/>
<dbReference type="EMBL" id="CP000050">
    <property type="protein sequence ID" value="AAY49259.1"/>
    <property type="molecule type" value="Genomic_DNA"/>
</dbReference>
<dbReference type="RefSeq" id="WP_002812972.1">
    <property type="nucleotide sequence ID" value="NZ_CP155948.1"/>
</dbReference>
<dbReference type="SMR" id="Q4UUL4"/>
<dbReference type="GeneID" id="98193442"/>
<dbReference type="KEGG" id="xcb:XC_2203"/>
<dbReference type="HOGENOM" id="CLU_060216_8_1_6"/>
<dbReference type="PHI-base" id="PHI:3945"/>
<dbReference type="Proteomes" id="UP000000420">
    <property type="component" value="Chromosome"/>
</dbReference>
<dbReference type="GO" id="GO:0005737">
    <property type="term" value="C:cytoplasm"/>
    <property type="evidence" value="ECO:0007669"/>
    <property type="project" value="UniProtKB-SubCell"/>
</dbReference>
<dbReference type="GO" id="GO:0005524">
    <property type="term" value="F:ATP binding"/>
    <property type="evidence" value="ECO:0007669"/>
    <property type="project" value="UniProtKB-UniRule"/>
</dbReference>
<dbReference type="GO" id="GO:0046872">
    <property type="term" value="F:metal ion binding"/>
    <property type="evidence" value="ECO:0007669"/>
    <property type="project" value="UniProtKB-KW"/>
</dbReference>
<dbReference type="GO" id="GO:0004550">
    <property type="term" value="F:nucleoside diphosphate kinase activity"/>
    <property type="evidence" value="ECO:0007669"/>
    <property type="project" value="UniProtKB-UniRule"/>
</dbReference>
<dbReference type="GO" id="GO:0006241">
    <property type="term" value="P:CTP biosynthetic process"/>
    <property type="evidence" value="ECO:0007669"/>
    <property type="project" value="UniProtKB-UniRule"/>
</dbReference>
<dbReference type="GO" id="GO:0006183">
    <property type="term" value="P:GTP biosynthetic process"/>
    <property type="evidence" value="ECO:0007669"/>
    <property type="project" value="UniProtKB-UniRule"/>
</dbReference>
<dbReference type="GO" id="GO:0006228">
    <property type="term" value="P:UTP biosynthetic process"/>
    <property type="evidence" value="ECO:0007669"/>
    <property type="project" value="UniProtKB-UniRule"/>
</dbReference>
<dbReference type="CDD" id="cd04413">
    <property type="entry name" value="NDPk_I"/>
    <property type="match status" value="1"/>
</dbReference>
<dbReference type="FunFam" id="3.30.70.141:FF:000001">
    <property type="entry name" value="Nucleoside diphosphate kinase"/>
    <property type="match status" value="1"/>
</dbReference>
<dbReference type="Gene3D" id="3.30.70.141">
    <property type="entry name" value="Nucleoside diphosphate kinase-like domain"/>
    <property type="match status" value="1"/>
</dbReference>
<dbReference type="HAMAP" id="MF_00451">
    <property type="entry name" value="NDP_kinase"/>
    <property type="match status" value="1"/>
</dbReference>
<dbReference type="InterPro" id="IPR034907">
    <property type="entry name" value="NDK-like_dom"/>
</dbReference>
<dbReference type="InterPro" id="IPR036850">
    <property type="entry name" value="NDK-like_dom_sf"/>
</dbReference>
<dbReference type="InterPro" id="IPR001564">
    <property type="entry name" value="Nucleoside_diP_kinase"/>
</dbReference>
<dbReference type="InterPro" id="IPR023005">
    <property type="entry name" value="Nucleoside_diP_kinase_AS"/>
</dbReference>
<dbReference type="NCBIfam" id="NF001908">
    <property type="entry name" value="PRK00668.1"/>
    <property type="match status" value="1"/>
</dbReference>
<dbReference type="PANTHER" id="PTHR11349">
    <property type="entry name" value="NUCLEOSIDE DIPHOSPHATE KINASE"/>
    <property type="match status" value="1"/>
</dbReference>
<dbReference type="Pfam" id="PF00334">
    <property type="entry name" value="NDK"/>
    <property type="match status" value="1"/>
</dbReference>
<dbReference type="PRINTS" id="PR01243">
    <property type="entry name" value="NUCDPKINASE"/>
</dbReference>
<dbReference type="SMART" id="SM00562">
    <property type="entry name" value="NDK"/>
    <property type="match status" value="1"/>
</dbReference>
<dbReference type="SUPFAM" id="SSF54919">
    <property type="entry name" value="Nucleoside diphosphate kinase, NDK"/>
    <property type="match status" value="1"/>
</dbReference>
<dbReference type="PROSITE" id="PS00469">
    <property type="entry name" value="NDPK"/>
    <property type="match status" value="1"/>
</dbReference>
<dbReference type="PROSITE" id="PS51374">
    <property type="entry name" value="NDPK_LIKE"/>
    <property type="match status" value="1"/>
</dbReference>
<feature type="chain" id="PRO_0000226586" description="Nucleoside diphosphate kinase">
    <location>
        <begin position="1"/>
        <end position="141"/>
    </location>
</feature>
<feature type="active site" description="Pros-phosphohistidine intermediate" evidence="1">
    <location>
        <position position="117"/>
    </location>
</feature>
<feature type="binding site" evidence="1">
    <location>
        <position position="11"/>
    </location>
    <ligand>
        <name>ATP</name>
        <dbReference type="ChEBI" id="CHEBI:30616"/>
    </ligand>
</feature>
<feature type="binding site" evidence="1">
    <location>
        <position position="59"/>
    </location>
    <ligand>
        <name>ATP</name>
        <dbReference type="ChEBI" id="CHEBI:30616"/>
    </ligand>
</feature>
<feature type="binding site" evidence="1">
    <location>
        <position position="87"/>
    </location>
    <ligand>
        <name>ATP</name>
        <dbReference type="ChEBI" id="CHEBI:30616"/>
    </ligand>
</feature>
<feature type="binding site" evidence="1">
    <location>
        <position position="93"/>
    </location>
    <ligand>
        <name>ATP</name>
        <dbReference type="ChEBI" id="CHEBI:30616"/>
    </ligand>
</feature>
<feature type="binding site" evidence="1">
    <location>
        <position position="104"/>
    </location>
    <ligand>
        <name>ATP</name>
        <dbReference type="ChEBI" id="CHEBI:30616"/>
    </ligand>
</feature>
<feature type="binding site" evidence="1">
    <location>
        <position position="114"/>
    </location>
    <ligand>
        <name>ATP</name>
        <dbReference type="ChEBI" id="CHEBI:30616"/>
    </ligand>
</feature>
<accession>Q4UUL4</accession>
<protein>
    <recommendedName>
        <fullName evidence="1">Nucleoside diphosphate kinase</fullName>
        <shortName evidence="1">NDK</shortName>
        <shortName evidence="1">NDP kinase</shortName>
        <ecNumber evidence="1">2.7.4.6</ecNumber>
    </recommendedName>
    <alternativeName>
        <fullName evidence="1">Nucleoside-2-P kinase</fullName>
    </alternativeName>
</protein>
<keyword id="KW-0067">ATP-binding</keyword>
<keyword id="KW-0963">Cytoplasm</keyword>
<keyword id="KW-0418">Kinase</keyword>
<keyword id="KW-0460">Magnesium</keyword>
<keyword id="KW-0479">Metal-binding</keyword>
<keyword id="KW-0546">Nucleotide metabolism</keyword>
<keyword id="KW-0547">Nucleotide-binding</keyword>
<keyword id="KW-0597">Phosphoprotein</keyword>
<keyword id="KW-0808">Transferase</keyword>
<sequence>MALERTLSIIKPDAVAKNVIGEIYSRFEKAGLKVVAAKYKQLSRREAEGFYAVHRERPFFNALVEFMISGPVMIQALEGENAVAAHRDLLGATNPKDAAPGTIRADFADSIDANAAHGSDSVENAANEVAYFFAATEVVSR</sequence>
<comment type="function">
    <text evidence="1">Major role in the synthesis of nucleoside triphosphates other than ATP. The ATP gamma phosphate is transferred to the NDP beta phosphate via a ping-pong mechanism, using a phosphorylated active-site intermediate.</text>
</comment>
<comment type="catalytic activity">
    <reaction evidence="1">
        <text>a 2'-deoxyribonucleoside 5'-diphosphate + ATP = a 2'-deoxyribonucleoside 5'-triphosphate + ADP</text>
        <dbReference type="Rhea" id="RHEA:44640"/>
        <dbReference type="ChEBI" id="CHEBI:30616"/>
        <dbReference type="ChEBI" id="CHEBI:61560"/>
        <dbReference type="ChEBI" id="CHEBI:73316"/>
        <dbReference type="ChEBI" id="CHEBI:456216"/>
        <dbReference type="EC" id="2.7.4.6"/>
    </reaction>
</comment>
<comment type="catalytic activity">
    <reaction evidence="1">
        <text>a ribonucleoside 5'-diphosphate + ATP = a ribonucleoside 5'-triphosphate + ADP</text>
        <dbReference type="Rhea" id="RHEA:18113"/>
        <dbReference type="ChEBI" id="CHEBI:30616"/>
        <dbReference type="ChEBI" id="CHEBI:57930"/>
        <dbReference type="ChEBI" id="CHEBI:61557"/>
        <dbReference type="ChEBI" id="CHEBI:456216"/>
        <dbReference type="EC" id="2.7.4.6"/>
    </reaction>
</comment>
<comment type="cofactor">
    <cofactor evidence="1">
        <name>Mg(2+)</name>
        <dbReference type="ChEBI" id="CHEBI:18420"/>
    </cofactor>
</comment>
<comment type="subunit">
    <text evidence="1">Homotetramer.</text>
</comment>
<comment type="subcellular location">
    <subcellularLocation>
        <location evidence="1">Cytoplasm</location>
    </subcellularLocation>
</comment>
<comment type="similarity">
    <text evidence="1">Belongs to the NDK family.</text>
</comment>
<evidence type="ECO:0000255" key="1">
    <source>
        <dbReference type="HAMAP-Rule" id="MF_00451"/>
    </source>
</evidence>
<proteinExistence type="inferred from homology"/>
<name>NDK_XANC8</name>
<reference key="1">
    <citation type="journal article" date="2005" name="Genome Res.">
        <title>Comparative and functional genomic analyses of the pathogenicity of phytopathogen Xanthomonas campestris pv. campestris.</title>
        <authorList>
            <person name="Qian W."/>
            <person name="Jia Y."/>
            <person name="Ren S.-X."/>
            <person name="He Y.-Q."/>
            <person name="Feng J.-X."/>
            <person name="Lu L.-F."/>
            <person name="Sun Q."/>
            <person name="Ying G."/>
            <person name="Tang D.-J."/>
            <person name="Tang H."/>
            <person name="Wu W."/>
            <person name="Hao P."/>
            <person name="Wang L."/>
            <person name="Jiang B.-L."/>
            <person name="Zeng S."/>
            <person name="Gu W.-Y."/>
            <person name="Lu G."/>
            <person name="Rong L."/>
            <person name="Tian Y."/>
            <person name="Yao Z."/>
            <person name="Fu G."/>
            <person name="Chen B."/>
            <person name="Fang R."/>
            <person name="Qiang B."/>
            <person name="Chen Z."/>
            <person name="Zhao G.-P."/>
            <person name="Tang J.-L."/>
            <person name="He C."/>
        </authorList>
    </citation>
    <scope>NUCLEOTIDE SEQUENCE [LARGE SCALE GENOMIC DNA]</scope>
    <source>
        <strain>8004</strain>
    </source>
</reference>